<evidence type="ECO:0000250" key="1"/>
<evidence type="ECO:0000256" key="2">
    <source>
        <dbReference type="SAM" id="MobiDB-lite"/>
    </source>
</evidence>
<evidence type="ECO:0000305" key="3"/>
<comment type="subcellular location">
    <subcellularLocation>
        <location evidence="1">Membrane raft</location>
        <topology evidence="1">Peripheral membrane protein</topology>
    </subcellularLocation>
    <text evidence="1">Localizes within detergent-insoluble glycolipid-enriched membranes.</text>
</comment>
<comment type="similarity">
    <text evidence="3">Belongs to the AIM3 family.</text>
</comment>
<reference key="1">
    <citation type="journal article" date="2004" name="Nature">
        <title>Genome evolution in yeasts.</title>
        <authorList>
            <person name="Dujon B."/>
            <person name="Sherman D."/>
            <person name="Fischer G."/>
            <person name="Durrens P."/>
            <person name="Casaregola S."/>
            <person name="Lafontaine I."/>
            <person name="de Montigny J."/>
            <person name="Marck C."/>
            <person name="Neuveglise C."/>
            <person name="Talla E."/>
            <person name="Goffard N."/>
            <person name="Frangeul L."/>
            <person name="Aigle M."/>
            <person name="Anthouard V."/>
            <person name="Babour A."/>
            <person name="Barbe V."/>
            <person name="Barnay S."/>
            <person name="Blanchin S."/>
            <person name="Beckerich J.-M."/>
            <person name="Beyne E."/>
            <person name="Bleykasten C."/>
            <person name="Boisrame A."/>
            <person name="Boyer J."/>
            <person name="Cattolico L."/>
            <person name="Confanioleri F."/>
            <person name="de Daruvar A."/>
            <person name="Despons L."/>
            <person name="Fabre E."/>
            <person name="Fairhead C."/>
            <person name="Ferry-Dumazet H."/>
            <person name="Groppi A."/>
            <person name="Hantraye F."/>
            <person name="Hennequin C."/>
            <person name="Jauniaux N."/>
            <person name="Joyet P."/>
            <person name="Kachouri R."/>
            <person name="Kerrest A."/>
            <person name="Koszul R."/>
            <person name="Lemaire M."/>
            <person name="Lesur I."/>
            <person name="Ma L."/>
            <person name="Muller H."/>
            <person name="Nicaud J.-M."/>
            <person name="Nikolski M."/>
            <person name="Oztas S."/>
            <person name="Ozier-Kalogeropoulos O."/>
            <person name="Pellenz S."/>
            <person name="Potier S."/>
            <person name="Richard G.-F."/>
            <person name="Straub M.-L."/>
            <person name="Suleau A."/>
            <person name="Swennen D."/>
            <person name="Tekaia F."/>
            <person name="Wesolowski-Louvel M."/>
            <person name="Westhof E."/>
            <person name="Wirth B."/>
            <person name="Zeniou-Meyer M."/>
            <person name="Zivanovic Y."/>
            <person name="Bolotin-Fukuhara M."/>
            <person name="Thierry A."/>
            <person name="Bouchier C."/>
            <person name="Caudron B."/>
            <person name="Scarpelli C."/>
            <person name="Gaillardin C."/>
            <person name="Weissenbach J."/>
            <person name="Wincker P."/>
            <person name="Souciet J.-L."/>
        </authorList>
    </citation>
    <scope>NUCLEOTIDE SEQUENCE [LARGE SCALE GENOMIC DNA]</scope>
    <source>
        <strain>ATCC 36239 / CBS 767 / BCRC 21394 / JCM 1990 / NBRC 0083 / IGC 2968</strain>
    </source>
</reference>
<feature type="chain" id="PRO_0000399600" description="Altered inheritance of mitochondria protein 3">
    <location>
        <begin position="1"/>
        <end position="927"/>
    </location>
</feature>
<feature type="region of interest" description="Disordered" evidence="2">
    <location>
        <begin position="22"/>
        <end position="671"/>
    </location>
</feature>
<feature type="compositionally biased region" description="Low complexity" evidence="2">
    <location>
        <begin position="22"/>
        <end position="33"/>
    </location>
</feature>
<feature type="compositionally biased region" description="Basic and acidic residues" evidence="2">
    <location>
        <begin position="41"/>
        <end position="60"/>
    </location>
</feature>
<feature type="compositionally biased region" description="Low complexity" evidence="2">
    <location>
        <begin position="67"/>
        <end position="93"/>
    </location>
</feature>
<feature type="compositionally biased region" description="Low complexity" evidence="2">
    <location>
        <begin position="123"/>
        <end position="193"/>
    </location>
</feature>
<feature type="compositionally biased region" description="Low complexity" evidence="2">
    <location>
        <begin position="206"/>
        <end position="222"/>
    </location>
</feature>
<feature type="compositionally biased region" description="Polar residues" evidence="2">
    <location>
        <begin position="223"/>
        <end position="232"/>
    </location>
</feature>
<feature type="compositionally biased region" description="Low complexity" evidence="2">
    <location>
        <begin position="233"/>
        <end position="275"/>
    </location>
</feature>
<feature type="compositionally biased region" description="Polar residues" evidence="2">
    <location>
        <begin position="290"/>
        <end position="303"/>
    </location>
</feature>
<feature type="compositionally biased region" description="Polar residues" evidence="2">
    <location>
        <begin position="383"/>
        <end position="395"/>
    </location>
</feature>
<feature type="compositionally biased region" description="Low complexity" evidence="2">
    <location>
        <begin position="401"/>
        <end position="417"/>
    </location>
</feature>
<feature type="compositionally biased region" description="Low complexity" evidence="2">
    <location>
        <begin position="424"/>
        <end position="440"/>
    </location>
</feature>
<feature type="compositionally biased region" description="Polar residues" evidence="2">
    <location>
        <begin position="469"/>
        <end position="478"/>
    </location>
</feature>
<feature type="compositionally biased region" description="Basic and acidic residues" evidence="2">
    <location>
        <begin position="479"/>
        <end position="488"/>
    </location>
</feature>
<feature type="compositionally biased region" description="Low complexity" evidence="2">
    <location>
        <begin position="503"/>
        <end position="517"/>
    </location>
</feature>
<feature type="compositionally biased region" description="Pro residues" evidence="2">
    <location>
        <begin position="558"/>
        <end position="568"/>
    </location>
</feature>
<feature type="compositionally biased region" description="Basic and acidic residues" evidence="2">
    <location>
        <begin position="571"/>
        <end position="593"/>
    </location>
</feature>
<feature type="compositionally biased region" description="Polar residues" evidence="2">
    <location>
        <begin position="618"/>
        <end position="629"/>
    </location>
</feature>
<keyword id="KW-0472">Membrane</keyword>
<keyword id="KW-1185">Reference proteome</keyword>
<dbReference type="EMBL" id="CR382138">
    <property type="protein sequence ID" value="CAG88939.2"/>
    <property type="molecule type" value="Genomic_DNA"/>
</dbReference>
<dbReference type="RefSeq" id="XP_460614.2">
    <property type="nucleotide sequence ID" value="XM_460614.1"/>
</dbReference>
<dbReference type="GeneID" id="2903387"/>
<dbReference type="KEGG" id="dha:DEHA2F05808g"/>
<dbReference type="VEuPathDB" id="FungiDB:DEHA2F05808g"/>
<dbReference type="eggNOG" id="ENOG502S09A">
    <property type="taxonomic scope" value="Eukaryota"/>
</dbReference>
<dbReference type="HOGENOM" id="CLU_325162_0_0_1"/>
<dbReference type="InParanoid" id="Q6BMF7"/>
<dbReference type="OMA" id="CWTLANE"/>
<dbReference type="OrthoDB" id="3357271at2759"/>
<dbReference type="Proteomes" id="UP000000599">
    <property type="component" value="Chromosome F"/>
</dbReference>
<dbReference type="GO" id="GO:0045121">
    <property type="term" value="C:membrane raft"/>
    <property type="evidence" value="ECO:0007669"/>
    <property type="project" value="UniProtKB-SubCell"/>
</dbReference>
<dbReference type="Gene3D" id="3.90.1720.60">
    <property type="match status" value="1"/>
</dbReference>
<dbReference type="Pfam" id="PF25459">
    <property type="entry name" value="AIM3_BBC1_C"/>
    <property type="match status" value="1"/>
</dbReference>
<accession>Q6BMF7</accession>
<protein>
    <recommendedName>
        <fullName>Altered inheritance of mitochondria protein 3</fullName>
    </recommendedName>
</protein>
<sequence length="927" mass="101422">MSFWDNNKDTFLAAGKATAKGIGTGTKALGKAGYRTYKNSQGERRGVPDNEADKAERSSYETRNNTNTSAYSGAYSGSNTGSNTGSNSGTSYYQSQPRHVDVNAYPLPPKRVAGPGEVRPLGHQDQGQQHQQMQQPQQHYSQNAQYSQAPYQPQQPQYPQQPQQPQYPQQPYSQDTQYSQAPYHPQQQIQPQPLTEGERPIPTPPTQAGTQPQFQPQLQQYQNGHIQQSHPAETQQPTYQVEQQQQSYSTEPQQQLQQPIFQPQPQSQDPYQQSPEANDSNQRPPAYDDSQLQNTQQEPTQVDSEPVKKSLPDPSSFAPPPIHKNRGVSEPSDSASYKKTGVSGKPSHVGKHGTSTTPKPTTLDMDPSKIGQPPPKPYRENSETTLNSASSNVRQTPPLPTRQSSNTTQNQLQTTSTPVPPPRSNTASVNSTSSQASSLPAPLPLPDNTGSEGSQKKAPPPKPIKKPMQLTSDGSSRNAEPDTLKQEPKNYMPNFAEEIALRKNTNSSLSGKGNLNSEDFNSELNSKLEPVNFENHAKPEPSDATPSLVKPKPKVMPKPKIGPKPSISPKPETKGKPIIKSKSEIKAKPDLKPKPIIGTKPVTVFGSKKIGNDMPISDSPSNLHVNKSNTPPPPIPRPRSAASNTSTPPPPPPSRNYRRAKAAAPPIESGPPNLDLQLSTGWFATTSGPMVLPKDLSGLNYNTSYSYVTRGSDKSHTRNINLRLRDLAIISYAITWSNDNINNAKMEVTKFIPSPISNKIPTVDELVANQNRFGEYVASWSENKMGQKVGTGECWDLARDALLKGCGKHAFVSTYYHHGYPIISLQGSENGVSYVDGKSPLDELRRGDILQYTSCIFKDKIRGSVSTVGNPDHTSVVLENTGDKLIIAEQNINNLKIVKKTEICLQNLTQGIVVGYRPMPAGWGGNL</sequence>
<organism>
    <name type="scientific">Debaryomyces hansenii (strain ATCC 36239 / CBS 767 / BCRC 21394 / JCM 1990 / NBRC 0083 / IGC 2968)</name>
    <name type="common">Yeast</name>
    <name type="synonym">Torulaspora hansenii</name>
    <dbReference type="NCBI Taxonomy" id="284592"/>
    <lineage>
        <taxon>Eukaryota</taxon>
        <taxon>Fungi</taxon>
        <taxon>Dikarya</taxon>
        <taxon>Ascomycota</taxon>
        <taxon>Saccharomycotina</taxon>
        <taxon>Pichiomycetes</taxon>
        <taxon>Debaryomycetaceae</taxon>
        <taxon>Debaryomyces</taxon>
    </lineage>
</organism>
<name>AIM3_DEBHA</name>
<proteinExistence type="inferred from homology"/>
<gene>
    <name type="primary">AIM3</name>
    <name type="ordered locus">DEHA2F05808g</name>
</gene>